<feature type="chain" id="PRO_0000177199" description="Large ribosomal subunit protein bL20">
    <location>
        <begin position="1"/>
        <end position="118"/>
    </location>
</feature>
<name>RL20_PHOLL</name>
<comment type="function">
    <text evidence="1">Binds directly to 23S ribosomal RNA and is necessary for the in vitro assembly process of the 50S ribosomal subunit. It is not involved in the protein synthesizing functions of that subunit.</text>
</comment>
<comment type="similarity">
    <text evidence="1">Belongs to the bacterial ribosomal protein bL20 family.</text>
</comment>
<dbReference type="EMBL" id="BX571867">
    <property type="protein sequence ID" value="CAE15040.1"/>
    <property type="molecule type" value="Genomic_DNA"/>
</dbReference>
<dbReference type="RefSeq" id="WP_011146888.1">
    <property type="nucleotide sequence ID" value="NC_005126.1"/>
</dbReference>
<dbReference type="SMR" id="Q7N3P9"/>
<dbReference type="STRING" id="243265.plu2666"/>
<dbReference type="GeneID" id="45654387"/>
<dbReference type="GeneID" id="48848929"/>
<dbReference type="KEGG" id="plu:plu2666"/>
<dbReference type="eggNOG" id="COG0292">
    <property type="taxonomic scope" value="Bacteria"/>
</dbReference>
<dbReference type="HOGENOM" id="CLU_123265_0_1_6"/>
<dbReference type="OrthoDB" id="9808966at2"/>
<dbReference type="Proteomes" id="UP000002514">
    <property type="component" value="Chromosome"/>
</dbReference>
<dbReference type="GO" id="GO:1990904">
    <property type="term" value="C:ribonucleoprotein complex"/>
    <property type="evidence" value="ECO:0007669"/>
    <property type="project" value="UniProtKB-KW"/>
</dbReference>
<dbReference type="GO" id="GO:0005840">
    <property type="term" value="C:ribosome"/>
    <property type="evidence" value="ECO:0007669"/>
    <property type="project" value="UniProtKB-KW"/>
</dbReference>
<dbReference type="GO" id="GO:0019843">
    <property type="term" value="F:rRNA binding"/>
    <property type="evidence" value="ECO:0007669"/>
    <property type="project" value="UniProtKB-UniRule"/>
</dbReference>
<dbReference type="GO" id="GO:0003735">
    <property type="term" value="F:structural constituent of ribosome"/>
    <property type="evidence" value="ECO:0007669"/>
    <property type="project" value="InterPro"/>
</dbReference>
<dbReference type="GO" id="GO:0000027">
    <property type="term" value="P:ribosomal large subunit assembly"/>
    <property type="evidence" value="ECO:0007669"/>
    <property type="project" value="UniProtKB-UniRule"/>
</dbReference>
<dbReference type="GO" id="GO:0006412">
    <property type="term" value="P:translation"/>
    <property type="evidence" value="ECO:0007669"/>
    <property type="project" value="InterPro"/>
</dbReference>
<dbReference type="CDD" id="cd07026">
    <property type="entry name" value="Ribosomal_L20"/>
    <property type="match status" value="1"/>
</dbReference>
<dbReference type="FunFam" id="1.10.1900.20:FF:000001">
    <property type="entry name" value="50S ribosomal protein L20"/>
    <property type="match status" value="1"/>
</dbReference>
<dbReference type="Gene3D" id="6.10.160.10">
    <property type="match status" value="1"/>
</dbReference>
<dbReference type="Gene3D" id="1.10.1900.20">
    <property type="entry name" value="Ribosomal protein L20"/>
    <property type="match status" value="1"/>
</dbReference>
<dbReference type="HAMAP" id="MF_00382">
    <property type="entry name" value="Ribosomal_bL20"/>
    <property type="match status" value="1"/>
</dbReference>
<dbReference type="InterPro" id="IPR005813">
    <property type="entry name" value="Ribosomal_bL20"/>
</dbReference>
<dbReference type="InterPro" id="IPR049946">
    <property type="entry name" value="RIBOSOMAL_L20_CS"/>
</dbReference>
<dbReference type="InterPro" id="IPR035566">
    <property type="entry name" value="Ribosomal_protein_bL20_C"/>
</dbReference>
<dbReference type="NCBIfam" id="TIGR01032">
    <property type="entry name" value="rplT_bact"/>
    <property type="match status" value="1"/>
</dbReference>
<dbReference type="PANTHER" id="PTHR10986">
    <property type="entry name" value="39S RIBOSOMAL PROTEIN L20"/>
    <property type="match status" value="1"/>
</dbReference>
<dbReference type="Pfam" id="PF00453">
    <property type="entry name" value="Ribosomal_L20"/>
    <property type="match status" value="1"/>
</dbReference>
<dbReference type="PRINTS" id="PR00062">
    <property type="entry name" value="RIBOSOMALL20"/>
</dbReference>
<dbReference type="SUPFAM" id="SSF74731">
    <property type="entry name" value="Ribosomal protein L20"/>
    <property type="match status" value="1"/>
</dbReference>
<dbReference type="PROSITE" id="PS00937">
    <property type="entry name" value="RIBOSOMAL_L20"/>
    <property type="match status" value="1"/>
</dbReference>
<gene>
    <name evidence="1" type="primary">rplT</name>
    <name type="ordered locus">plu2666</name>
</gene>
<proteinExistence type="inferred from homology"/>
<sequence length="118" mass="13512">MARVKRGVVARARHKKILKQAKGYYGARSRVYRVAFQAVIKAGQYAYRDRRQRKRQFRQLWIARINAAARQNGLSYSRFIDGLKKASIEIDRKILADIAVFDKVAFAALVEKAKSALA</sequence>
<protein>
    <recommendedName>
        <fullName evidence="1">Large ribosomal subunit protein bL20</fullName>
    </recommendedName>
    <alternativeName>
        <fullName evidence="2">50S ribosomal protein L20</fullName>
    </alternativeName>
</protein>
<accession>Q7N3P9</accession>
<keyword id="KW-1185">Reference proteome</keyword>
<keyword id="KW-0687">Ribonucleoprotein</keyword>
<keyword id="KW-0689">Ribosomal protein</keyword>
<keyword id="KW-0694">RNA-binding</keyword>
<keyword id="KW-0699">rRNA-binding</keyword>
<reference key="1">
    <citation type="journal article" date="2003" name="Nat. Biotechnol.">
        <title>The genome sequence of the entomopathogenic bacterium Photorhabdus luminescens.</title>
        <authorList>
            <person name="Duchaud E."/>
            <person name="Rusniok C."/>
            <person name="Frangeul L."/>
            <person name="Buchrieser C."/>
            <person name="Givaudan A."/>
            <person name="Taourit S."/>
            <person name="Bocs S."/>
            <person name="Boursaux-Eude C."/>
            <person name="Chandler M."/>
            <person name="Charles J.-F."/>
            <person name="Dassa E."/>
            <person name="Derose R."/>
            <person name="Derzelle S."/>
            <person name="Freyssinet G."/>
            <person name="Gaudriault S."/>
            <person name="Medigue C."/>
            <person name="Lanois A."/>
            <person name="Powell K."/>
            <person name="Siguier P."/>
            <person name="Vincent R."/>
            <person name="Wingate V."/>
            <person name="Zouine M."/>
            <person name="Glaser P."/>
            <person name="Boemare N."/>
            <person name="Danchin A."/>
            <person name="Kunst F."/>
        </authorList>
    </citation>
    <scope>NUCLEOTIDE SEQUENCE [LARGE SCALE GENOMIC DNA]</scope>
    <source>
        <strain>DSM 15139 / CIP 105565 / TT01</strain>
    </source>
</reference>
<evidence type="ECO:0000255" key="1">
    <source>
        <dbReference type="HAMAP-Rule" id="MF_00382"/>
    </source>
</evidence>
<evidence type="ECO:0000305" key="2"/>
<organism>
    <name type="scientific">Photorhabdus laumondii subsp. laumondii (strain DSM 15139 / CIP 105565 / TT01)</name>
    <name type="common">Photorhabdus luminescens subsp. laumondii</name>
    <dbReference type="NCBI Taxonomy" id="243265"/>
    <lineage>
        <taxon>Bacteria</taxon>
        <taxon>Pseudomonadati</taxon>
        <taxon>Pseudomonadota</taxon>
        <taxon>Gammaproteobacteria</taxon>
        <taxon>Enterobacterales</taxon>
        <taxon>Morganellaceae</taxon>
        <taxon>Photorhabdus</taxon>
    </lineage>
</organism>